<evidence type="ECO:0000255" key="1">
    <source>
        <dbReference type="HAMAP-Rule" id="MF_00369"/>
    </source>
</evidence>
<evidence type="ECO:0000256" key="2">
    <source>
        <dbReference type="SAM" id="MobiDB-lite"/>
    </source>
</evidence>
<evidence type="ECO:0000305" key="3"/>
<organism>
    <name type="scientific">Metallosphaera sedula (strain ATCC 51363 / DSM 5348 / JCM 9185 / NBRC 15509 / TH2)</name>
    <dbReference type="NCBI Taxonomy" id="399549"/>
    <lineage>
        <taxon>Archaea</taxon>
        <taxon>Thermoproteota</taxon>
        <taxon>Thermoprotei</taxon>
        <taxon>Sulfolobales</taxon>
        <taxon>Sulfolobaceae</taxon>
        <taxon>Metallosphaera</taxon>
    </lineage>
</organism>
<proteinExistence type="inferred from homology"/>
<dbReference type="EMBL" id="CP000682">
    <property type="protein sequence ID" value="ABP94238.1"/>
    <property type="molecule type" value="Genomic_DNA"/>
</dbReference>
<dbReference type="RefSeq" id="WP_011921207.1">
    <property type="nucleotide sequence ID" value="NZ_CP139956.1"/>
</dbReference>
<dbReference type="SMR" id="A4YCT6"/>
<dbReference type="STRING" id="399549.Msed_0061"/>
<dbReference type="KEGG" id="mse:Msed_0061"/>
<dbReference type="eggNOG" id="arCOG04129">
    <property type="taxonomic scope" value="Archaea"/>
</dbReference>
<dbReference type="HOGENOM" id="CLU_103610_1_1_2"/>
<dbReference type="Proteomes" id="UP000000242">
    <property type="component" value="Chromosome"/>
</dbReference>
<dbReference type="GO" id="GO:1990904">
    <property type="term" value="C:ribonucleoprotein complex"/>
    <property type="evidence" value="ECO:0007669"/>
    <property type="project" value="UniProtKB-KW"/>
</dbReference>
<dbReference type="GO" id="GO:0005840">
    <property type="term" value="C:ribosome"/>
    <property type="evidence" value="ECO:0007669"/>
    <property type="project" value="UniProtKB-KW"/>
</dbReference>
<dbReference type="GO" id="GO:0003735">
    <property type="term" value="F:structural constituent of ribosome"/>
    <property type="evidence" value="ECO:0007669"/>
    <property type="project" value="InterPro"/>
</dbReference>
<dbReference type="GO" id="GO:0006412">
    <property type="term" value="P:translation"/>
    <property type="evidence" value="ECO:0007669"/>
    <property type="project" value="UniProtKB-UniRule"/>
</dbReference>
<dbReference type="FunFam" id="2.30.30.70:FF:000001">
    <property type="entry name" value="60S ribosomal protein L21"/>
    <property type="match status" value="1"/>
</dbReference>
<dbReference type="Gene3D" id="2.30.30.70">
    <property type="entry name" value="Ribosomal protein L21"/>
    <property type="match status" value="1"/>
</dbReference>
<dbReference type="HAMAP" id="MF_00369">
    <property type="entry name" value="Ribosomal_eL21"/>
    <property type="match status" value="1"/>
</dbReference>
<dbReference type="InterPro" id="IPR001147">
    <property type="entry name" value="Ribosomal_eL21"/>
</dbReference>
<dbReference type="InterPro" id="IPR022856">
    <property type="entry name" value="Ribosomal_eL21_arc"/>
</dbReference>
<dbReference type="InterPro" id="IPR018259">
    <property type="entry name" value="Ribosomal_eL21_CS"/>
</dbReference>
<dbReference type="InterPro" id="IPR036948">
    <property type="entry name" value="Ribosomal_eL21_sf"/>
</dbReference>
<dbReference type="InterPro" id="IPR008991">
    <property type="entry name" value="Translation_prot_SH3-like_sf"/>
</dbReference>
<dbReference type="NCBIfam" id="NF003303">
    <property type="entry name" value="PRK04306.1"/>
    <property type="match status" value="1"/>
</dbReference>
<dbReference type="PANTHER" id="PTHR20981">
    <property type="entry name" value="60S RIBOSOMAL PROTEIN L21"/>
    <property type="match status" value="1"/>
</dbReference>
<dbReference type="Pfam" id="PF01157">
    <property type="entry name" value="Ribosomal_L21e"/>
    <property type="match status" value="1"/>
</dbReference>
<dbReference type="SUPFAM" id="SSF50104">
    <property type="entry name" value="Translation proteins SH3-like domain"/>
    <property type="match status" value="1"/>
</dbReference>
<dbReference type="PROSITE" id="PS01171">
    <property type="entry name" value="RIBOSOMAL_L21E"/>
    <property type="match status" value="1"/>
</dbReference>
<name>RL21_METS5</name>
<keyword id="KW-1185">Reference proteome</keyword>
<keyword id="KW-0687">Ribonucleoprotein</keyword>
<keyword id="KW-0689">Ribosomal protein</keyword>
<reference key="1">
    <citation type="journal article" date="2008" name="Appl. Environ. Microbiol.">
        <title>The genome sequence of the metal-mobilizing, extremely thermoacidophilic archaeon Metallosphaera sedula provides insights into bioleaching-associated metabolism.</title>
        <authorList>
            <person name="Auernik K.S."/>
            <person name="Maezato Y."/>
            <person name="Blum P.H."/>
            <person name="Kelly R.M."/>
        </authorList>
    </citation>
    <scope>NUCLEOTIDE SEQUENCE [LARGE SCALE GENOMIC DNA]</scope>
    <source>
        <strain>ATCC 51363 / DSM 5348 / JCM 9185 / NBRC 15509 / TH2</strain>
    </source>
</reference>
<gene>
    <name evidence="1" type="primary">rpl21e</name>
    <name type="ordered locus">Msed_0061</name>
</gene>
<accession>A4YCT6</accession>
<sequence length="99" mass="11263">MVKHSRGNRTRSRKLLKKSPRERGAVPSLGRLMLDLKEGERVVIKINSSTHSGMPHRRYQGKVGTILGKRGKSYEVKVKLGDKEKILIVRPEHLNQIKA</sequence>
<feature type="chain" id="PRO_1000072122" description="Large ribosomal subunit protein eL21">
    <location>
        <begin position="1"/>
        <end position="99"/>
    </location>
</feature>
<feature type="region of interest" description="Disordered" evidence="2">
    <location>
        <begin position="1"/>
        <end position="26"/>
    </location>
</feature>
<feature type="compositionally biased region" description="Basic residues" evidence="2">
    <location>
        <begin position="1"/>
        <end position="18"/>
    </location>
</feature>
<comment type="similarity">
    <text evidence="1">Belongs to the eukaryotic ribosomal protein eL21 family.</text>
</comment>
<protein>
    <recommendedName>
        <fullName evidence="1">Large ribosomal subunit protein eL21</fullName>
    </recommendedName>
    <alternativeName>
        <fullName evidence="3">50S ribosomal protein L21e</fullName>
    </alternativeName>
</protein>